<keyword id="KW-0075">B-cell activation</keyword>
<keyword id="KW-0202">Cytokine</keyword>
<keyword id="KW-1015">Disulfide bond</keyword>
<keyword id="KW-0325">Glycoprotein</keyword>
<keyword id="KW-0339">Growth factor</keyword>
<keyword id="KW-0964">Secreted</keyword>
<keyword id="KW-0732">Signal</keyword>
<sequence>MGLTSQLIPTLVCLLVCTSNFAHGHKCDITLQEIIKTLNTLTARKNSCMELTVADVFAAPKNTTEKETFCKAATALRHIYRHHNCLSKHLSGLDRNLSGLANTTCSVNDSKKSTLRDFLERLKKIMKEKYSKC</sequence>
<accession>Q865X5</accession>
<gene>
    <name type="primary">IL4</name>
</gene>
<organism>
    <name type="scientific">Lama glama</name>
    <name type="common">Llama</name>
    <dbReference type="NCBI Taxonomy" id="9844"/>
    <lineage>
        <taxon>Eukaryota</taxon>
        <taxon>Metazoa</taxon>
        <taxon>Chordata</taxon>
        <taxon>Craniata</taxon>
        <taxon>Vertebrata</taxon>
        <taxon>Euteleostomi</taxon>
        <taxon>Mammalia</taxon>
        <taxon>Eutheria</taxon>
        <taxon>Laurasiatheria</taxon>
        <taxon>Artiodactyla</taxon>
        <taxon>Tylopoda</taxon>
        <taxon>Camelidae</taxon>
        <taxon>Lama</taxon>
    </lineage>
</organism>
<comment type="function">
    <text evidence="2">Participates in at least several B-cell activation processes as well as of other cell types. It is a costimulator of DNA-synthesis. It induces the expression of class II MHC molecules on resting B-cells. It enhances both secretion and cell surface expression of IgE and IgG1. It also regulates the expression of the low affinity Fc receptor for IgE (CD23) on both lymphocytes and monocytes. Positively regulates IL31RA expression in macrophages. Stimulates autophagy in dendritic cells by interfering with mTORC1 signaling and through the induction of RUFY4.</text>
</comment>
<comment type="subcellular location">
    <subcellularLocation>
        <location>Secreted</location>
    </subcellularLocation>
</comment>
<comment type="similarity">
    <text evidence="4">Belongs to the IL-4/IL-13 family.</text>
</comment>
<dbReference type="EMBL" id="AB107648">
    <property type="protein sequence ID" value="BAC75385.1"/>
    <property type="molecule type" value="mRNA"/>
</dbReference>
<dbReference type="SMR" id="Q865X5"/>
<dbReference type="GlyCosmos" id="Q865X5">
    <property type="glycosylation" value="4 sites, No reported glycans"/>
</dbReference>
<dbReference type="GO" id="GO:0005615">
    <property type="term" value="C:extracellular space"/>
    <property type="evidence" value="ECO:0007669"/>
    <property type="project" value="UniProtKB-KW"/>
</dbReference>
<dbReference type="GO" id="GO:0005125">
    <property type="term" value="F:cytokine activity"/>
    <property type="evidence" value="ECO:0007669"/>
    <property type="project" value="UniProtKB-KW"/>
</dbReference>
<dbReference type="GO" id="GO:0008083">
    <property type="term" value="F:growth factor activity"/>
    <property type="evidence" value="ECO:0007669"/>
    <property type="project" value="UniProtKB-KW"/>
</dbReference>
<dbReference type="GO" id="GO:0005136">
    <property type="term" value="F:interleukin-4 receptor binding"/>
    <property type="evidence" value="ECO:0007669"/>
    <property type="project" value="InterPro"/>
</dbReference>
<dbReference type="GO" id="GO:0042113">
    <property type="term" value="P:B cell activation"/>
    <property type="evidence" value="ECO:0007669"/>
    <property type="project" value="UniProtKB-KW"/>
</dbReference>
<dbReference type="GO" id="GO:0006955">
    <property type="term" value="P:immune response"/>
    <property type="evidence" value="ECO:0007669"/>
    <property type="project" value="InterPro"/>
</dbReference>
<dbReference type="GO" id="GO:0035771">
    <property type="term" value="P:interleukin-4-mediated signaling pathway"/>
    <property type="evidence" value="ECO:0007669"/>
    <property type="project" value="TreeGrafter"/>
</dbReference>
<dbReference type="GO" id="GO:0050728">
    <property type="term" value="P:negative regulation of inflammatory response"/>
    <property type="evidence" value="ECO:0007669"/>
    <property type="project" value="TreeGrafter"/>
</dbReference>
<dbReference type="GO" id="GO:0045893">
    <property type="term" value="P:positive regulation of DNA-templated transcription"/>
    <property type="evidence" value="ECO:0007669"/>
    <property type="project" value="TreeGrafter"/>
</dbReference>
<dbReference type="GO" id="GO:0016239">
    <property type="term" value="P:positive regulation of macroautophagy"/>
    <property type="evidence" value="ECO:0000250"/>
    <property type="project" value="UniProtKB"/>
</dbReference>
<dbReference type="GO" id="GO:0050776">
    <property type="term" value="P:regulation of immune response"/>
    <property type="evidence" value="ECO:0007669"/>
    <property type="project" value="TreeGrafter"/>
</dbReference>
<dbReference type="FunFam" id="1.20.1250.10:FF:000014">
    <property type="entry name" value="Interleukin-4"/>
    <property type="match status" value="1"/>
</dbReference>
<dbReference type="Gene3D" id="1.20.1250.10">
    <property type="match status" value="1"/>
</dbReference>
<dbReference type="InterPro" id="IPR009079">
    <property type="entry name" value="4_helix_cytokine-like_core"/>
</dbReference>
<dbReference type="InterPro" id="IPR002354">
    <property type="entry name" value="IL-4"/>
</dbReference>
<dbReference type="InterPro" id="IPR001325">
    <property type="entry name" value="IL-4/IL-13"/>
</dbReference>
<dbReference type="InterPro" id="IPR018096">
    <property type="entry name" value="IL-4/IL-13_CS"/>
</dbReference>
<dbReference type="PANTHER" id="PTHR47401">
    <property type="entry name" value="INTERLEUKIN-4"/>
    <property type="match status" value="1"/>
</dbReference>
<dbReference type="PANTHER" id="PTHR47401:SF1">
    <property type="entry name" value="INTERLEUKIN-4"/>
    <property type="match status" value="1"/>
</dbReference>
<dbReference type="Pfam" id="PF00727">
    <property type="entry name" value="IL4"/>
    <property type="match status" value="1"/>
</dbReference>
<dbReference type="PIRSF" id="PIRSF001941">
    <property type="entry name" value="Interleukin_4"/>
    <property type="match status" value="1"/>
</dbReference>
<dbReference type="PRINTS" id="PR00431">
    <property type="entry name" value="INTERLEUKIN4"/>
</dbReference>
<dbReference type="SMART" id="SM00190">
    <property type="entry name" value="IL4_13"/>
    <property type="match status" value="1"/>
</dbReference>
<dbReference type="SUPFAM" id="SSF47266">
    <property type="entry name" value="4-helical cytokines"/>
    <property type="match status" value="1"/>
</dbReference>
<dbReference type="PROSITE" id="PS00838">
    <property type="entry name" value="INTERLEUKIN_4_13"/>
    <property type="match status" value="1"/>
</dbReference>
<evidence type="ECO:0000250" key="1"/>
<evidence type="ECO:0000250" key="2">
    <source>
        <dbReference type="UniProtKB" id="P07750"/>
    </source>
</evidence>
<evidence type="ECO:0000255" key="3"/>
<evidence type="ECO:0000305" key="4"/>
<protein>
    <recommendedName>
        <fullName>Interleukin-4</fullName>
        <shortName>IL-4</shortName>
    </recommendedName>
    <alternativeName>
        <fullName>B-cell stimulatory factor 1</fullName>
        <shortName>BSF-1</shortName>
    </alternativeName>
    <alternativeName>
        <fullName>Lymphocyte stimulatory factor 1</fullName>
    </alternativeName>
</protein>
<name>IL4_LAMGL</name>
<reference key="1">
    <citation type="submission" date="2003-04" db="EMBL/GenBank/DDBJ databases">
        <title>Cloning and sequence analysis of cytokine cDNAs of llama and camel.</title>
        <authorList>
            <person name="Odbileg R."/>
            <person name="Lee S.-I."/>
            <person name="Yoshida R."/>
            <person name="Chang K.-S."/>
            <person name="Ohashi K."/>
            <person name="Sugimoto C."/>
            <person name="Onuma M."/>
        </authorList>
    </citation>
    <scope>NUCLEOTIDE SEQUENCE [MRNA]</scope>
</reference>
<feature type="signal peptide" evidence="3">
    <location>
        <begin position="1"/>
        <end position="24"/>
    </location>
</feature>
<feature type="chain" id="PRO_0000015533" description="Interleukin-4">
    <location>
        <begin position="25"/>
        <end position="133"/>
    </location>
</feature>
<feature type="glycosylation site" description="N-linked (GlcNAc...) asparagine" evidence="3">
    <location>
        <position position="62"/>
    </location>
</feature>
<feature type="glycosylation site" description="N-linked (GlcNAc...) asparagine" evidence="3">
    <location>
        <position position="96"/>
    </location>
</feature>
<feature type="glycosylation site" description="N-linked (GlcNAc...) asparagine" evidence="3">
    <location>
        <position position="102"/>
    </location>
</feature>
<feature type="glycosylation site" description="N-linked (GlcNAc...) asparagine" evidence="3">
    <location>
        <position position="108"/>
    </location>
</feature>
<feature type="disulfide bond" evidence="1">
    <location>
        <begin position="27"/>
        <end position="133"/>
    </location>
</feature>
<feature type="disulfide bond" evidence="1">
    <location>
        <begin position="48"/>
        <end position="85"/>
    </location>
</feature>
<feature type="disulfide bond" evidence="1">
    <location>
        <begin position="70"/>
        <end position="105"/>
    </location>
</feature>
<proteinExistence type="evidence at transcript level"/>